<feature type="chain" id="PRO_1000064753" description="Ribosome maturation factor RimP">
    <location>
        <begin position="1"/>
        <end position="162"/>
    </location>
</feature>
<keyword id="KW-0963">Cytoplasm</keyword>
<keyword id="KW-1185">Reference proteome</keyword>
<keyword id="KW-0690">Ribosome biogenesis</keyword>
<dbReference type="EMBL" id="CP000352">
    <property type="protein sequence ID" value="ABF08912.1"/>
    <property type="molecule type" value="Genomic_DNA"/>
</dbReference>
<dbReference type="RefSeq" id="WP_011516747.1">
    <property type="nucleotide sequence ID" value="NC_007973.1"/>
</dbReference>
<dbReference type="SMR" id="Q1LLR4"/>
<dbReference type="STRING" id="266264.Rmet_2033"/>
<dbReference type="KEGG" id="rme:Rmet_2033"/>
<dbReference type="eggNOG" id="COG0779">
    <property type="taxonomic scope" value="Bacteria"/>
</dbReference>
<dbReference type="HOGENOM" id="CLU_070525_1_0_4"/>
<dbReference type="Proteomes" id="UP000002429">
    <property type="component" value="Chromosome"/>
</dbReference>
<dbReference type="GO" id="GO:0005829">
    <property type="term" value="C:cytosol"/>
    <property type="evidence" value="ECO:0007669"/>
    <property type="project" value="TreeGrafter"/>
</dbReference>
<dbReference type="GO" id="GO:0000028">
    <property type="term" value="P:ribosomal small subunit assembly"/>
    <property type="evidence" value="ECO:0007669"/>
    <property type="project" value="TreeGrafter"/>
</dbReference>
<dbReference type="GO" id="GO:0006412">
    <property type="term" value="P:translation"/>
    <property type="evidence" value="ECO:0007669"/>
    <property type="project" value="TreeGrafter"/>
</dbReference>
<dbReference type="CDD" id="cd01734">
    <property type="entry name" value="YlxS_C"/>
    <property type="match status" value="1"/>
</dbReference>
<dbReference type="Gene3D" id="2.30.30.180">
    <property type="entry name" value="Ribosome maturation factor RimP, C-terminal domain"/>
    <property type="match status" value="1"/>
</dbReference>
<dbReference type="Gene3D" id="3.30.300.70">
    <property type="entry name" value="RimP-like superfamily, N-terminal"/>
    <property type="match status" value="1"/>
</dbReference>
<dbReference type="HAMAP" id="MF_01077">
    <property type="entry name" value="RimP"/>
    <property type="match status" value="1"/>
</dbReference>
<dbReference type="InterPro" id="IPR003728">
    <property type="entry name" value="Ribosome_maturation_RimP"/>
</dbReference>
<dbReference type="InterPro" id="IPR028998">
    <property type="entry name" value="RimP_C"/>
</dbReference>
<dbReference type="InterPro" id="IPR036847">
    <property type="entry name" value="RimP_C_sf"/>
</dbReference>
<dbReference type="InterPro" id="IPR028989">
    <property type="entry name" value="RimP_N"/>
</dbReference>
<dbReference type="InterPro" id="IPR035956">
    <property type="entry name" value="RimP_N_sf"/>
</dbReference>
<dbReference type="NCBIfam" id="NF000929">
    <property type="entry name" value="PRK00092.2-1"/>
    <property type="match status" value="1"/>
</dbReference>
<dbReference type="PANTHER" id="PTHR33867">
    <property type="entry name" value="RIBOSOME MATURATION FACTOR RIMP"/>
    <property type="match status" value="1"/>
</dbReference>
<dbReference type="PANTHER" id="PTHR33867:SF1">
    <property type="entry name" value="RIBOSOME MATURATION FACTOR RIMP"/>
    <property type="match status" value="1"/>
</dbReference>
<dbReference type="Pfam" id="PF17384">
    <property type="entry name" value="DUF150_C"/>
    <property type="match status" value="1"/>
</dbReference>
<dbReference type="Pfam" id="PF02576">
    <property type="entry name" value="RimP_N"/>
    <property type="match status" value="1"/>
</dbReference>
<dbReference type="SUPFAM" id="SSF74942">
    <property type="entry name" value="YhbC-like, C-terminal domain"/>
    <property type="match status" value="1"/>
</dbReference>
<dbReference type="SUPFAM" id="SSF75420">
    <property type="entry name" value="YhbC-like, N-terminal domain"/>
    <property type="match status" value="1"/>
</dbReference>
<accession>Q1LLR4</accession>
<proteinExistence type="inferred from homology"/>
<name>RIMP_CUPMC</name>
<comment type="function">
    <text evidence="1">Required for maturation of 30S ribosomal subunits.</text>
</comment>
<comment type="subcellular location">
    <subcellularLocation>
        <location evidence="1">Cytoplasm</location>
    </subcellularLocation>
</comment>
<comment type="similarity">
    <text evidence="1">Belongs to the RimP family.</text>
</comment>
<evidence type="ECO:0000255" key="1">
    <source>
        <dbReference type="HAMAP-Rule" id="MF_01077"/>
    </source>
</evidence>
<reference key="1">
    <citation type="journal article" date="2010" name="PLoS ONE">
        <title>The complete genome sequence of Cupriavidus metallidurans strain CH34, a master survivalist in harsh and anthropogenic environments.</title>
        <authorList>
            <person name="Janssen P.J."/>
            <person name="Van Houdt R."/>
            <person name="Moors H."/>
            <person name="Monsieurs P."/>
            <person name="Morin N."/>
            <person name="Michaux A."/>
            <person name="Benotmane M.A."/>
            <person name="Leys N."/>
            <person name="Vallaeys T."/>
            <person name="Lapidus A."/>
            <person name="Monchy S."/>
            <person name="Medigue C."/>
            <person name="Taghavi S."/>
            <person name="McCorkle S."/>
            <person name="Dunn J."/>
            <person name="van der Lelie D."/>
            <person name="Mergeay M."/>
        </authorList>
    </citation>
    <scope>NUCLEOTIDE SEQUENCE [LARGE SCALE GENOMIC DNA]</scope>
    <source>
        <strain>ATCC 43123 / DSM 2839 / NBRC 102507 / CH34</strain>
    </source>
</reference>
<sequence length="162" mass="17857">MHLADLIETTLIGMGYELVELERAPAGLLRVYIDQPETGIVIEDCEKVSRQLTHVLTVENVDYERLEVSSPGLDRPLKKLADFVRFAGAEVRVTLRLPVNGQKNFVGILCEPAGDAGAEKIGLEFEGKDGPALLEFAISDVDRARLVPVIDFKGNQRKGNKQ</sequence>
<organism>
    <name type="scientific">Cupriavidus metallidurans (strain ATCC 43123 / DSM 2839 / NBRC 102507 / CH34)</name>
    <name type="common">Ralstonia metallidurans</name>
    <dbReference type="NCBI Taxonomy" id="266264"/>
    <lineage>
        <taxon>Bacteria</taxon>
        <taxon>Pseudomonadati</taxon>
        <taxon>Pseudomonadota</taxon>
        <taxon>Betaproteobacteria</taxon>
        <taxon>Burkholderiales</taxon>
        <taxon>Burkholderiaceae</taxon>
        <taxon>Cupriavidus</taxon>
    </lineage>
</organism>
<gene>
    <name evidence="1" type="primary">rimP</name>
    <name type="ordered locus">Rmet_2033</name>
</gene>
<protein>
    <recommendedName>
        <fullName evidence="1">Ribosome maturation factor RimP</fullName>
    </recommendedName>
</protein>